<organism>
    <name type="scientific">Pseudomonas fluorescens (strain SBW25)</name>
    <dbReference type="NCBI Taxonomy" id="216595"/>
    <lineage>
        <taxon>Bacteria</taxon>
        <taxon>Pseudomonadati</taxon>
        <taxon>Pseudomonadota</taxon>
        <taxon>Gammaproteobacteria</taxon>
        <taxon>Pseudomonadales</taxon>
        <taxon>Pseudomonadaceae</taxon>
        <taxon>Pseudomonas</taxon>
    </lineage>
</organism>
<sequence>MRYPIWRVGVFIAAAVWPLFWLYEAWSAVLGPDPGKVLVDRLGLGTLILLLITLAMTPLQKLSGWAGWIAVRRQLGLWCFAYVVLHLAAYCVFVLGLDWSQLGVELRKRPYIIVGALGFLLLLVLAVTSNRYSQRRLGSRWKKLHRLVYVVLGLGLLHMLWIVRADLKEWAIYASIGALLLVLRIPPVMRRIPRLIAKKPLSATKA</sequence>
<gene>
    <name evidence="1" type="primary">msrQ</name>
    <name type="ordered locus">PFLU_5215</name>
</gene>
<keyword id="KW-0997">Cell inner membrane</keyword>
<keyword id="KW-1003">Cell membrane</keyword>
<keyword id="KW-0249">Electron transport</keyword>
<keyword id="KW-0285">Flavoprotein</keyword>
<keyword id="KW-0288">FMN</keyword>
<keyword id="KW-0349">Heme</keyword>
<keyword id="KW-0408">Iron</keyword>
<keyword id="KW-0472">Membrane</keyword>
<keyword id="KW-0479">Metal-binding</keyword>
<keyword id="KW-0812">Transmembrane</keyword>
<keyword id="KW-1133">Transmembrane helix</keyword>
<keyword id="KW-0813">Transport</keyword>
<protein>
    <recommendedName>
        <fullName evidence="1">Protein-methionine-sulfoxide reductase heme-binding subunit MsrQ</fullName>
    </recommendedName>
    <alternativeName>
        <fullName evidence="1">Flavocytochrome MsrQ</fullName>
    </alternativeName>
</protein>
<comment type="function">
    <text evidence="1">Part of the MsrPQ system that repairs oxidized periplasmic proteins containing methionine sulfoxide residues (Met-O), using respiratory chain electrons. Thus protects these proteins from oxidative-stress damage caused by reactive species of oxygen and chlorine generated by the host defense mechanisms. MsrPQ is essential for the maintenance of envelope integrity under bleach stress, rescuing a wide series of structurally unrelated periplasmic proteins from methionine oxidation. MsrQ provides electrons for reduction to the reductase catalytic subunit MsrP, using the quinone pool of the respiratory chain.</text>
</comment>
<comment type="cofactor">
    <cofactor evidence="1">
        <name>FMN</name>
        <dbReference type="ChEBI" id="CHEBI:58210"/>
    </cofactor>
    <text evidence="1">Binds 1 FMN per subunit.</text>
</comment>
<comment type="cofactor">
    <cofactor evidence="1">
        <name>heme b</name>
        <dbReference type="ChEBI" id="CHEBI:60344"/>
    </cofactor>
    <text evidence="1">Binds 1 heme b (iron(II)-protoporphyrin IX) group per subunit.</text>
</comment>
<comment type="subunit">
    <text evidence="1">Heterodimer of a catalytic subunit (MsrP) and a heme-binding subunit (MsrQ).</text>
</comment>
<comment type="subcellular location">
    <subcellularLocation>
        <location evidence="1">Cell inner membrane</location>
        <topology evidence="1">Multi-pass membrane protein</topology>
    </subcellularLocation>
</comment>
<comment type="similarity">
    <text evidence="1">Belongs to the MsrQ family.</text>
</comment>
<proteinExistence type="inferred from homology"/>
<dbReference type="EMBL" id="AM181176">
    <property type="protein sequence ID" value="CAY52292.1"/>
    <property type="molecule type" value="Genomic_DNA"/>
</dbReference>
<dbReference type="RefSeq" id="WP_015885886.1">
    <property type="nucleotide sequence ID" value="NC_012660.1"/>
</dbReference>
<dbReference type="SMR" id="C3K222"/>
<dbReference type="STRING" id="294.SRM1_04829"/>
<dbReference type="PATRIC" id="fig|216595.4.peg.5347"/>
<dbReference type="eggNOG" id="COG2717">
    <property type="taxonomic scope" value="Bacteria"/>
</dbReference>
<dbReference type="HOGENOM" id="CLU_080662_0_1_6"/>
<dbReference type="OrthoDB" id="9788328at2"/>
<dbReference type="GO" id="GO:0005886">
    <property type="term" value="C:plasma membrane"/>
    <property type="evidence" value="ECO:0007669"/>
    <property type="project" value="UniProtKB-SubCell"/>
</dbReference>
<dbReference type="GO" id="GO:0009055">
    <property type="term" value="F:electron transfer activity"/>
    <property type="evidence" value="ECO:0007669"/>
    <property type="project" value="UniProtKB-UniRule"/>
</dbReference>
<dbReference type="GO" id="GO:0010181">
    <property type="term" value="F:FMN binding"/>
    <property type="evidence" value="ECO:0007669"/>
    <property type="project" value="UniProtKB-UniRule"/>
</dbReference>
<dbReference type="GO" id="GO:0020037">
    <property type="term" value="F:heme binding"/>
    <property type="evidence" value="ECO:0007669"/>
    <property type="project" value="UniProtKB-UniRule"/>
</dbReference>
<dbReference type="GO" id="GO:0046872">
    <property type="term" value="F:metal ion binding"/>
    <property type="evidence" value="ECO:0007669"/>
    <property type="project" value="UniProtKB-KW"/>
</dbReference>
<dbReference type="GO" id="GO:0016679">
    <property type="term" value="F:oxidoreductase activity, acting on diphenols and related substances as donors"/>
    <property type="evidence" value="ECO:0007669"/>
    <property type="project" value="TreeGrafter"/>
</dbReference>
<dbReference type="GO" id="GO:0030091">
    <property type="term" value="P:protein repair"/>
    <property type="evidence" value="ECO:0007669"/>
    <property type="project" value="UniProtKB-UniRule"/>
</dbReference>
<dbReference type="HAMAP" id="MF_01207">
    <property type="entry name" value="MsrQ"/>
    <property type="match status" value="1"/>
</dbReference>
<dbReference type="InterPro" id="IPR013130">
    <property type="entry name" value="Fe3_Rdtase_TM_dom"/>
</dbReference>
<dbReference type="InterPro" id="IPR022837">
    <property type="entry name" value="MsrQ-like"/>
</dbReference>
<dbReference type="NCBIfam" id="NF003831">
    <property type="entry name" value="PRK05419.1-2"/>
    <property type="match status" value="1"/>
</dbReference>
<dbReference type="PANTHER" id="PTHR36964">
    <property type="entry name" value="PROTEIN-METHIONINE-SULFOXIDE REDUCTASE HEME-BINDING SUBUNIT MSRQ"/>
    <property type="match status" value="1"/>
</dbReference>
<dbReference type="PANTHER" id="PTHR36964:SF1">
    <property type="entry name" value="PROTEIN-METHIONINE-SULFOXIDE REDUCTASE HEME-BINDING SUBUNIT MSRQ"/>
    <property type="match status" value="1"/>
</dbReference>
<dbReference type="Pfam" id="PF01794">
    <property type="entry name" value="Ferric_reduct"/>
    <property type="match status" value="1"/>
</dbReference>
<accession>C3K222</accession>
<feature type="chain" id="PRO_1000213854" description="Protein-methionine-sulfoxide reductase heme-binding subunit MsrQ">
    <location>
        <begin position="1"/>
        <end position="206"/>
    </location>
</feature>
<feature type="transmembrane region" description="Helical" evidence="1">
    <location>
        <begin position="10"/>
        <end position="30"/>
    </location>
</feature>
<feature type="transmembrane region" description="Helical" evidence="1">
    <location>
        <begin position="42"/>
        <end position="62"/>
    </location>
</feature>
<feature type="transmembrane region" description="Helical" evidence="1">
    <location>
        <begin position="75"/>
        <end position="95"/>
    </location>
</feature>
<feature type="transmembrane region" description="Helical" evidence="1">
    <location>
        <begin position="110"/>
        <end position="130"/>
    </location>
</feature>
<feature type="transmembrane region" description="Helical" evidence="1">
    <location>
        <begin position="147"/>
        <end position="167"/>
    </location>
</feature>
<feature type="transmembrane region" description="Helical" evidence="1">
    <location>
        <begin position="169"/>
        <end position="189"/>
    </location>
</feature>
<evidence type="ECO:0000255" key="1">
    <source>
        <dbReference type="HAMAP-Rule" id="MF_01207"/>
    </source>
</evidence>
<name>MSRQ_PSEFS</name>
<reference key="1">
    <citation type="journal article" date="2009" name="Genome Biol.">
        <title>Genomic and genetic analyses of diversity and plant interactions of Pseudomonas fluorescens.</title>
        <authorList>
            <person name="Silby M.W."/>
            <person name="Cerdeno-Tarraga A.M."/>
            <person name="Vernikos G.S."/>
            <person name="Giddens S.R."/>
            <person name="Jackson R.W."/>
            <person name="Preston G.M."/>
            <person name="Zhang X.-X."/>
            <person name="Moon C.D."/>
            <person name="Gehrig S.M."/>
            <person name="Godfrey S.A.C."/>
            <person name="Knight C.G."/>
            <person name="Malone J.G."/>
            <person name="Robinson Z."/>
            <person name="Spiers A.J."/>
            <person name="Harris S."/>
            <person name="Challis G.L."/>
            <person name="Yaxley A.M."/>
            <person name="Harris D."/>
            <person name="Seeger K."/>
            <person name="Murphy L."/>
            <person name="Rutter S."/>
            <person name="Squares R."/>
            <person name="Quail M.A."/>
            <person name="Saunders E."/>
            <person name="Mavromatis K."/>
            <person name="Brettin T.S."/>
            <person name="Bentley S.D."/>
            <person name="Hothersall J."/>
            <person name="Stephens E."/>
            <person name="Thomas C.M."/>
            <person name="Parkhill J."/>
            <person name="Levy S.B."/>
            <person name="Rainey P.B."/>
            <person name="Thomson N.R."/>
        </authorList>
    </citation>
    <scope>NUCLEOTIDE SEQUENCE [LARGE SCALE GENOMIC DNA]</scope>
    <source>
        <strain>SBW25</strain>
    </source>
</reference>